<reference key="1">
    <citation type="journal article" date="1995" name="Science">
        <title>Whole-genome random sequencing and assembly of Haemophilus influenzae Rd.</title>
        <authorList>
            <person name="Fleischmann R.D."/>
            <person name="Adams M.D."/>
            <person name="White O."/>
            <person name="Clayton R.A."/>
            <person name="Kirkness E.F."/>
            <person name="Kerlavage A.R."/>
            <person name="Bult C.J."/>
            <person name="Tomb J.-F."/>
            <person name="Dougherty B.A."/>
            <person name="Merrick J.M."/>
            <person name="McKenney K."/>
            <person name="Sutton G.G."/>
            <person name="FitzHugh W."/>
            <person name="Fields C.A."/>
            <person name="Gocayne J.D."/>
            <person name="Scott J.D."/>
            <person name="Shirley R."/>
            <person name="Liu L.-I."/>
            <person name="Glodek A."/>
            <person name="Kelley J.M."/>
            <person name="Weidman J.F."/>
            <person name="Phillips C.A."/>
            <person name="Spriggs T."/>
            <person name="Hedblom E."/>
            <person name="Cotton M.D."/>
            <person name="Utterback T.R."/>
            <person name="Hanna M.C."/>
            <person name="Nguyen D.T."/>
            <person name="Saudek D.M."/>
            <person name="Brandon R.C."/>
            <person name="Fine L.D."/>
            <person name="Fritchman J.L."/>
            <person name="Fuhrmann J.L."/>
            <person name="Geoghagen N.S.M."/>
            <person name="Gnehm C.L."/>
            <person name="McDonald L.A."/>
            <person name="Small K.V."/>
            <person name="Fraser C.M."/>
            <person name="Smith H.O."/>
            <person name="Venter J.C."/>
        </authorList>
    </citation>
    <scope>NUCLEOTIDE SEQUENCE [LARGE SCALE GENOMIC DNA]</scope>
    <source>
        <strain>ATCC 51907 / DSM 11121 / KW20 / Rd</strain>
    </source>
</reference>
<reference key="2">
    <citation type="journal article" date="1996" name="FEBS Lett.">
        <title>Existence of Na+-translocating NADH-quinone reductase in Haemophilus influenzae.</title>
        <authorList>
            <person name="Hayashi M."/>
            <person name="Nakayama Y."/>
            <person name="Unemoto T."/>
        </authorList>
    </citation>
    <scope>IDENTIFICATION AS NQR SYSTEM</scope>
    <source>
        <strain>ATCC 51907 / DSM 11121 / KW20 / Rd</strain>
    </source>
</reference>
<sequence length="198" mass="21306">MEHYISLFVKAVFIENMALSFFLGMCTFLAVSKKVSPAFGLGIAVTFVLGIAVPVNQLIYANVLKENALIEGVDLSFLNFITFIGVIAGLVQILEMVLDKFMPSLYNALGIFLPLIAVNCAIFGGVSFMVQRDYNFPESIVYGFGSGLGWMLAIVALAGLTEKMKYADIPAGLKGLGITFISVGLMALGFMSFSGIQL</sequence>
<keyword id="KW-0997">Cell inner membrane</keyword>
<keyword id="KW-1003">Cell membrane</keyword>
<keyword id="KW-0406">Ion transport</keyword>
<keyword id="KW-0472">Membrane</keyword>
<keyword id="KW-0520">NAD</keyword>
<keyword id="KW-1185">Reference proteome</keyword>
<keyword id="KW-0915">Sodium</keyword>
<keyword id="KW-0739">Sodium transport</keyword>
<keyword id="KW-1278">Translocase</keyword>
<keyword id="KW-0812">Transmembrane</keyword>
<keyword id="KW-1133">Transmembrane helix</keyword>
<keyword id="KW-0813">Transport</keyword>
<keyword id="KW-0830">Ubiquinone</keyword>
<comment type="function">
    <text evidence="1">NQR complex catalyzes the reduction of ubiquinone-1 to ubiquinol by two successive reactions, coupled with the transport of Na(+) ions from the cytoplasm to the periplasm. NqrA to NqrE are probably involved in the second step, the conversion of ubisemiquinone to ubiquinol.</text>
</comment>
<comment type="catalytic activity">
    <reaction evidence="1">
        <text>a ubiquinone + n Na(+)(in) + NADH + H(+) = a ubiquinol + n Na(+)(out) + NAD(+)</text>
        <dbReference type="Rhea" id="RHEA:47748"/>
        <dbReference type="Rhea" id="RHEA-COMP:9565"/>
        <dbReference type="Rhea" id="RHEA-COMP:9566"/>
        <dbReference type="ChEBI" id="CHEBI:15378"/>
        <dbReference type="ChEBI" id="CHEBI:16389"/>
        <dbReference type="ChEBI" id="CHEBI:17976"/>
        <dbReference type="ChEBI" id="CHEBI:29101"/>
        <dbReference type="ChEBI" id="CHEBI:57540"/>
        <dbReference type="ChEBI" id="CHEBI:57945"/>
        <dbReference type="EC" id="7.2.1.1"/>
    </reaction>
</comment>
<comment type="subunit">
    <text evidence="1">Composed of six subunits; NqrA, NqrB, NqrC, NqrD, NqrE and NqrF.</text>
</comment>
<comment type="subcellular location">
    <subcellularLocation>
        <location evidence="1">Cell inner membrane</location>
        <topology evidence="1">Multi-pass membrane protein</topology>
    </subcellularLocation>
</comment>
<comment type="similarity">
    <text evidence="1">Belongs to the NqrDE/RnfAE family.</text>
</comment>
<gene>
    <name evidence="1" type="primary">nqrE</name>
    <name type="ordered locus">HI_0170</name>
</gene>
<accession>P71342</accession>
<proteinExistence type="inferred from homology"/>
<organism>
    <name type="scientific">Haemophilus influenzae (strain ATCC 51907 / DSM 11121 / KW20 / Rd)</name>
    <dbReference type="NCBI Taxonomy" id="71421"/>
    <lineage>
        <taxon>Bacteria</taxon>
        <taxon>Pseudomonadati</taxon>
        <taxon>Pseudomonadota</taxon>
        <taxon>Gammaproteobacteria</taxon>
        <taxon>Pasteurellales</taxon>
        <taxon>Pasteurellaceae</taxon>
        <taxon>Haemophilus</taxon>
    </lineage>
</organism>
<protein>
    <recommendedName>
        <fullName evidence="1">Na(+)-translocating NADH-quinone reductase subunit E</fullName>
        <shortName evidence="1">Na(+)-NQR subunit E</shortName>
        <shortName evidence="1">Na(+)-translocating NQR subunit E</shortName>
        <ecNumber evidence="1">7.2.1.1</ecNumber>
    </recommendedName>
    <alternativeName>
        <fullName evidence="1">NQR complex subunit E</fullName>
    </alternativeName>
    <alternativeName>
        <fullName evidence="1">NQR-1 subunit E</fullName>
    </alternativeName>
</protein>
<feature type="chain" id="PRO_0000214252" description="Na(+)-translocating NADH-quinone reductase subunit E">
    <location>
        <begin position="1"/>
        <end position="198"/>
    </location>
</feature>
<feature type="transmembrane region" description="Helical" evidence="1">
    <location>
        <begin position="11"/>
        <end position="31"/>
    </location>
</feature>
<feature type="transmembrane region" description="Helical" evidence="1">
    <location>
        <begin position="35"/>
        <end position="55"/>
    </location>
</feature>
<feature type="transmembrane region" description="Helical" evidence="1">
    <location>
        <begin position="77"/>
        <end position="97"/>
    </location>
</feature>
<feature type="transmembrane region" description="Helical" evidence="1">
    <location>
        <begin position="110"/>
        <end position="130"/>
    </location>
</feature>
<feature type="transmembrane region" description="Helical" evidence="1">
    <location>
        <begin position="140"/>
        <end position="160"/>
    </location>
</feature>
<feature type="transmembrane region" description="Helical" evidence="1">
    <location>
        <begin position="176"/>
        <end position="196"/>
    </location>
</feature>
<name>NQRE_HAEIN</name>
<dbReference type="EC" id="7.2.1.1" evidence="1"/>
<dbReference type="EMBL" id="L42023">
    <property type="protein sequence ID" value="AAC21840.1"/>
    <property type="molecule type" value="Genomic_DNA"/>
</dbReference>
<dbReference type="RefSeq" id="NP_438338.1">
    <property type="nucleotide sequence ID" value="NC_000907.1"/>
</dbReference>
<dbReference type="SMR" id="P71342"/>
<dbReference type="STRING" id="71421.HI_0170"/>
<dbReference type="EnsemblBacteria" id="AAC21840">
    <property type="protein sequence ID" value="AAC21840"/>
    <property type="gene ID" value="HI_0170"/>
</dbReference>
<dbReference type="KEGG" id="hin:HI_0170"/>
<dbReference type="PATRIC" id="fig|71421.8.peg.174"/>
<dbReference type="eggNOG" id="COG2209">
    <property type="taxonomic scope" value="Bacteria"/>
</dbReference>
<dbReference type="HOGENOM" id="CLU_095255_0_0_6"/>
<dbReference type="OrthoDB" id="9803631at2"/>
<dbReference type="PhylomeDB" id="P71342"/>
<dbReference type="BioCyc" id="HINF71421:G1GJ1-180-MONOMER"/>
<dbReference type="Proteomes" id="UP000000579">
    <property type="component" value="Chromosome"/>
</dbReference>
<dbReference type="GO" id="GO:0009276">
    <property type="term" value="C:Gram-negative-bacterium-type cell wall"/>
    <property type="evidence" value="ECO:0007669"/>
    <property type="project" value="InterPro"/>
</dbReference>
<dbReference type="GO" id="GO:0005886">
    <property type="term" value="C:plasma membrane"/>
    <property type="evidence" value="ECO:0000318"/>
    <property type="project" value="GO_Central"/>
</dbReference>
<dbReference type="GO" id="GO:0016655">
    <property type="term" value="F:oxidoreductase activity, acting on NAD(P)H, quinone or similar compound as acceptor"/>
    <property type="evidence" value="ECO:0007669"/>
    <property type="project" value="UniProtKB-UniRule"/>
</dbReference>
<dbReference type="GO" id="GO:0022904">
    <property type="term" value="P:respiratory electron transport chain"/>
    <property type="evidence" value="ECO:0007669"/>
    <property type="project" value="InterPro"/>
</dbReference>
<dbReference type="GO" id="GO:0006814">
    <property type="term" value="P:sodium ion transport"/>
    <property type="evidence" value="ECO:0007669"/>
    <property type="project" value="UniProtKB-UniRule"/>
</dbReference>
<dbReference type="HAMAP" id="MF_00429">
    <property type="entry name" value="NqrE"/>
    <property type="match status" value="1"/>
</dbReference>
<dbReference type="InterPro" id="IPR003667">
    <property type="entry name" value="NqrDE/RnfAE"/>
</dbReference>
<dbReference type="InterPro" id="IPR050133">
    <property type="entry name" value="NqrDE/RnfAE_oxidrdctase"/>
</dbReference>
<dbReference type="InterPro" id="IPR010967">
    <property type="entry name" value="NqrE"/>
</dbReference>
<dbReference type="NCBIfam" id="TIGR01940">
    <property type="entry name" value="nqrE"/>
    <property type="match status" value="1"/>
</dbReference>
<dbReference type="PANTHER" id="PTHR30335">
    <property type="entry name" value="INTEGRAL MEMBRANE PROTEIN OF SOXR-REDUCING COMPLEX"/>
    <property type="match status" value="1"/>
</dbReference>
<dbReference type="PANTHER" id="PTHR30335:SF1">
    <property type="entry name" value="NA(+)-TRANSLOCATING NADH-QUINONE REDUCTASE SUBUNIT E"/>
    <property type="match status" value="1"/>
</dbReference>
<dbReference type="Pfam" id="PF02508">
    <property type="entry name" value="Rnf-Nqr"/>
    <property type="match status" value="1"/>
</dbReference>
<dbReference type="PIRSF" id="PIRSF006102">
    <property type="entry name" value="NQR_DE"/>
    <property type="match status" value="1"/>
</dbReference>
<evidence type="ECO:0000255" key="1">
    <source>
        <dbReference type="HAMAP-Rule" id="MF_00429"/>
    </source>
</evidence>